<proteinExistence type="inferred from homology"/>
<organism>
    <name type="scientific">Aotus azarae</name>
    <name type="common">Azara's night monkey</name>
    <name type="synonym">Simia azarae</name>
    <dbReference type="NCBI Taxonomy" id="30591"/>
    <lineage>
        <taxon>Eukaryota</taxon>
        <taxon>Metazoa</taxon>
        <taxon>Chordata</taxon>
        <taxon>Craniata</taxon>
        <taxon>Vertebrata</taxon>
        <taxon>Euteleostomi</taxon>
        <taxon>Mammalia</taxon>
        <taxon>Eutheria</taxon>
        <taxon>Euarchontoglires</taxon>
        <taxon>Primates</taxon>
        <taxon>Haplorrhini</taxon>
        <taxon>Platyrrhini</taxon>
        <taxon>Aotidae</taxon>
        <taxon>Aotus</taxon>
    </lineage>
</organism>
<comment type="function">
    <molecule>Cytochrome b-c1 complex subunit Rieske, mitochondrial</molecule>
    <text evidence="2 4">Component of the ubiquinol-cytochrome c oxidoreductase, a multisubunit transmembrane complex that is part of the mitochondrial electron transport chain which drives oxidative phosphorylation. The respiratory chain contains 3 multisubunit complexes succinate dehydrogenase (complex II, CII), ubiquinol-cytochrome c oxidoreductase (cytochrome b-c1 complex, complex III, CIII) and cytochrome c oxidase (complex IV, CIV), that cooperate to transfer electrons derived from NADH and succinate to molecular oxygen, creating an electrochemical gradient over the inner membrane that drives transmembrane transport and the ATP synthase. The cytochrome b-c1 complex catalyzes electron transfer from ubiquinol to cytochrome c, linking this redox reaction to translocation of protons across the mitochondrial inner membrane, with protons being carried across the membrane as hydrogens on the quinol. In the process called Q cycle, 2 protons are consumed from the matrix, 4 protons are released into the intermembrane space and 2 electrons are passed to cytochrome c. The Rieske protein is a catalytic core subunit containing a [2Fe-2S] iron-sulfur cluster. It cycles between 2 conformational states during catalysis to transfer electrons from the quinol bound in the Q(0) site in cytochrome b to cytochrome c1 (By similarity). Incorporation of UQCRFS1 is the penultimate step in complex III assembly (By similarity).</text>
</comment>
<comment type="function">
    <molecule>Cytochrome b-c1 complex subunit 9</molecule>
    <text evidence="3 4 6">Component of the ubiquinol-cytochrome c oxidoreductase (cytochrome b-c1 complex, complex III, CIII). UQCRFS1 undergoes proteolytic processing once it is incorporated in the complex III dimer. One of the fragments, called subunit 9, corresponds to its mitochondrial targeting sequence (MTS) (By similarity). The proteolytic processing is necessary for the correct insertion of UQCRFS1 in the complex III dimer, but the persistence of UQCRFS1-derived fragments may prevent newly imported UQCRFS1 to be processed and assembled into complex III and is detrimental for the complex III structure and function (By similarity).</text>
</comment>
<comment type="catalytic activity">
    <reaction evidence="2">
        <text>a quinol + 2 Fe(III)-[cytochrome c](out) = a quinone + 2 Fe(II)-[cytochrome c](out) + 2 H(+)(out)</text>
        <dbReference type="Rhea" id="RHEA:11484"/>
        <dbReference type="Rhea" id="RHEA-COMP:10350"/>
        <dbReference type="Rhea" id="RHEA-COMP:14399"/>
        <dbReference type="ChEBI" id="CHEBI:15378"/>
        <dbReference type="ChEBI" id="CHEBI:24646"/>
        <dbReference type="ChEBI" id="CHEBI:29033"/>
        <dbReference type="ChEBI" id="CHEBI:29034"/>
        <dbReference type="ChEBI" id="CHEBI:132124"/>
        <dbReference type="EC" id="7.1.1.8"/>
    </reaction>
</comment>
<comment type="cofactor">
    <cofactor evidence="7">
        <name>[2Fe-2S] cluster</name>
        <dbReference type="ChEBI" id="CHEBI:190135"/>
    </cofactor>
    <text evidence="4 7">Binds 1 [2Fe-2S] cluster per subunit. Fe-S cluster delivery to the Rieske protein is mediated by components of the iron sulfur (Fe-S) cluster assembly machinery that reside in the mitochondrial matrix (including HSC20 and LYRM7) (By similarity).</text>
</comment>
<comment type="subunit">
    <molecule>Cytochrome b-c1 complex subunit Rieske, mitochondrial</molecule>
    <text evidence="3 4">Component of the ubiquinol-cytochrome c oxidoreductase (cytochrome b-c1 complex, complex III, CIII), a multisubunit enzyme composed of 11 subunits. The complex is composed of 3 respiratory subunits cytochrome b, cytochrome c1 and Rieske protein UQCRFS1, 2 core protein subunits UQCRC1/QCR1 and UQCRC2/QCR2, and 6 low-molecular weight protein subunits UQCRH/QCR6, UQCRB/QCR7, UQCRQ/QCR8, UQCR10/QCR9, UQCR11/QCR10 and subunit 9, the cleavage product of Rieske protein UQCRFS1. The complex exists as an obligatory dimer and forms supercomplexes (SCs) in the inner mitochondrial membrane with NADH-ubiquinone oxidoreductase (complex I, CI) and cytochrome c oxidase (complex IV, CIV), resulting in different assemblies (supercomplex SCI(1)III(2)IV(1) and megacomplex MCI(2)III(2)IV(2)) (By similarity). Incorporation of the Rieske protein UQCRFS1 is the penultimate step in complex III assembly. Interacts with TTC19, which is involved in the clearance of UQCRFS1 fragments (By similarity).</text>
</comment>
<comment type="subunit">
    <molecule>Cytochrome b-c1 complex subunit 9</molecule>
    <text evidence="3">Component of the ubiquinol-cytochrome c oxidoreductase (cytochrome b-c1 complex, complex III, CIII). Subunit 9 corresponds to the mitochondrial targeting sequence (MTS) of Rieske protein UQCRFS1. It is retained after processing and incorporated inside complex III, where it remains bound to the complex and localizes between the 2 core subunits UQCRC1/QCR1 and UQCRC2/QCR2.</text>
</comment>
<comment type="subcellular location">
    <subcellularLocation>
        <location evidence="5">Mitochondrion inner membrane</location>
        <topology evidence="5">Single-pass membrane protein</topology>
    </subcellularLocation>
</comment>
<comment type="PTM">
    <text evidence="6">Proteolytic processing is necessary for the correct insertion of UQCRFS1 in the complex III dimer. Several fragments are generated during UQCRFS1 insertion, most probably due to the endogenous matrix-processing peptidase (MPP) activity of the 2 core protein subunits UQCRC1/QCR1 and UQCRC2/QCR2, which are homologous to the 2 mitochondrial-processing peptidase (MPP) subunits beta-MPP and alpha-MPP respectively. The action of the protease is also necessary for the clearance of the UQCRFS1 fragments.</text>
</comment>
<comment type="miscellaneous">
    <text>The Rieske protein is a high potential 2Fe-2S protein.</text>
</comment>
<comment type="similarity">
    <text evidence="8">Belongs to the Rieske iron-sulfur protein family.</text>
</comment>
<comment type="caution">
    <text evidence="3 4">Several peptides are generated during UQCRFS1 insertion. According to some authors, the identification of the transit peptide as the subunit 9, does not necessary imply that it must be considered as a structural subunit of the complex III dimer as additional fragments from UQCRFS1 are also present.</text>
</comment>
<protein>
    <recommendedName>
        <fullName>Cytochrome b-c1 complex subunit Rieske, mitochondrial</fullName>
        <ecNumber>7.1.1.8</ecNumber>
    </recommendedName>
    <alternativeName>
        <fullName>Complex III subunit 5</fullName>
    </alternativeName>
    <alternativeName>
        <fullName>Cytochrome b-c1 complex subunit 5</fullName>
    </alternativeName>
    <alternativeName>
        <fullName>Rieske iron-sulfur protein</fullName>
        <shortName>RISP</shortName>
    </alternativeName>
    <alternativeName>
        <fullName evidence="8">Rieske protein UQCRFS1</fullName>
    </alternativeName>
    <alternativeName>
        <fullName>Ubiquinol-cytochrome c reductase iron-sulfur subunit</fullName>
    </alternativeName>
    <component>
        <recommendedName>
            <fullName evidence="3">Cytochrome b-c1 complex subunit 9</fullName>
            <shortName evidence="3">Su9</shortName>
            <shortName evidence="3">Subunit 9</shortName>
        </recommendedName>
        <alternativeName>
            <fullName evidence="3">8 kDa subunit 9</fullName>
        </alternativeName>
        <alternativeName>
            <fullName>Complex III subunit IX</fullName>
        </alternativeName>
        <alternativeName>
            <fullName>Cytochrome b-c1 complex subunit 11</fullName>
        </alternativeName>
        <alternativeName>
            <fullName>UQCRFS1 mitochondrial targeting sequence</fullName>
            <shortName>UQCRFS1 MTS</shortName>
        </alternativeName>
        <alternativeName>
            <fullName evidence="3">Ubiquinol-cytochrome c reductase 8 kDa protein</fullName>
        </alternativeName>
    </component>
</protein>
<dbReference type="EC" id="7.1.1.8"/>
<dbReference type="EMBL" id="AY387510">
    <property type="protein sequence ID" value="AAR32732.1"/>
    <property type="molecule type" value="Genomic_DNA"/>
</dbReference>
<dbReference type="EMBL" id="AY387509">
    <property type="protein sequence ID" value="AAR32732.1"/>
    <property type="status" value="JOINED"/>
    <property type="molecule type" value="Genomic_DNA"/>
</dbReference>
<dbReference type="GO" id="GO:0005743">
    <property type="term" value="C:mitochondrial inner membrane"/>
    <property type="evidence" value="ECO:0007669"/>
    <property type="project" value="UniProtKB-SubCell"/>
</dbReference>
<dbReference type="GO" id="GO:0051537">
    <property type="term" value="F:2 iron, 2 sulfur cluster binding"/>
    <property type="evidence" value="ECO:0007669"/>
    <property type="project" value="UniProtKB-KW"/>
</dbReference>
<dbReference type="GO" id="GO:0046872">
    <property type="term" value="F:metal ion binding"/>
    <property type="evidence" value="ECO:0007669"/>
    <property type="project" value="UniProtKB-KW"/>
</dbReference>
<dbReference type="GO" id="GO:0008121">
    <property type="term" value="F:ubiquinol-cytochrome-c reductase activity"/>
    <property type="evidence" value="ECO:0007669"/>
    <property type="project" value="UniProtKB-EC"/>
</dbReference>
<dbReference type="CDD" id="cd03470">
    <property type="entry name" value="Rieske_cytochrome_bc1"/>
    <property type="match status" value="1"/>
</dbReference>
<dbReference type="FunFam" id="1.20.5.270:FF:000001">
    <property type="entry name" value="Cytochrome b-c1 complex subunit Rieske, mitochondrial"/>
    <property type="match status" value="1"/>
</dbReference>
<dbReference type="FunFam" id="2.10.210.10:FF:000001">
    <property type="entry name" value="Cytochrome b-c1 complex subunit Rieske, mitochondrial"/>
    <property type="match status" value="1"/>
</dbReference>
<dbReference type="FunFam" id="2.102.10.10:FF:000001">
    <property type="entry name" value="Cytochrome b-c1 complex subunit Rieske, mitochondrial"/>
    <property type="match status" value="1"/>
</dbReference>
<dbReference type="Gene3D" id="2.10.210.10">
    <property type="entry name" value="Cytochrome Bc1 Complex, Chain I"/>
    <property type="match status" value="1"/>
</dbReference>
<dbReference type="Gene3D" id="2.102.10.10">
    <property type="entry name" value="Rieske [2Fe-2S] iron-sulphur domain"/>
    <property type="match status" value="1"/>
</dbReference>
<dbReference type="Gene3D" id="1.20.5.270">
    <property type="entry name" value="Ubiquinol cytochrome reductase, transmembrane domain"/>
    <property type="match status" value="1"/>
</dbReference>
<dbReference type="InterPro" id="IPR037008">
    <property type="entry name" value="bc1_Rieske_TM_sf"/>
</dbReference>
<dbReference type="InterPro" id="IPR011070">
    <property type="entry name" value="Globular_prot_asu/bsu"/>
</dbReference>
<dbReference type="InterPro" id="IPR017941">
    <property type="entry name" value="Rieske_2Fe-2S"/>
</dbReference>
<dbReference type="InterPro" id="IPR036922">
    <property type="entry name" value="Rieske_2Fe-2S_sf"/>
</dbReference>
<dbReference type="InterPro" id="IPR014349">
    <property type="entry name" value="Rieske_Fe-S_prot"/>
</dbReference>
<dbReference type="InterPro" id="IPR005805">
    <property type="entry name" value="Rieske_Fe-S_prot_C"/>
</dbReference>
<dbReference type="InterPro" id="IPR004192">
    <property type="entry name" value="Rieske_TM"/>
</dbReference>
<dbReference type="InterPro" id="IPR006317">
    <property type="entry name" value="Ubiquinol_cyt_c_Rdtase_Fe-S-su"/>
</dbReference>
<dbReference type="InterPro" id="IPR015248">
    <property type="entry name" value="UQCRFS1_N"/>
</dbReference>
<dbReference type="NCBIfam" id="TIGR01416">
    <property type="entry name" value="Rieske_proteo"/>
    <property type="match status" value="1"/>
</dbReference>
<dbReference type="PANTHER" id="PTHR10134">
    <property type="entry name" value="CYTOCHROME B-C1 COMPLEX SUBUNIT RIESKE, MITOCHONDRIAL"/>
    <property type="match status" value="1"/>
</dbReference>
<dbReference type="Pfam" id="PF00355">
    <property type="entry name" value="Rieske"/>
    <property type="match status" value="1"/>
</dbReference>
<dbReference type="Pfam" id="PF09165">
    <property type="entry name" value="Ubiq-Cytc-red_N"/>
    <property type="match status" value="1"/>
</dbReference>
<dbReference type="Pfam" id="PF02921">
    <property type="entry name" value="UCR_TM"/>
    <property type="match status" value="1"/>
</dbReference>
<dbReference type="PRINTS" id="PR00162">
    <property type="entry name" value="RIESKE"/>
</dbReference>
<dbReference type="SUPFAM" id="SSF50022">
    <property type="entry name" value="ISP domain"/>
    <property type="match status" value="1"/>
</dbReference>
<dbReference type="SUPFAM" id="SSF81502">
    <property type="entry name" value="ISP transmembrane anchor"/>
    <property type="match status" value="1"/>
</dbReference>
<dbReference type="SUPFAM" id="SSF56568">
    <property type="entry name" value="Non-globular alpha+beta subunits of globular proteins"/>
    <property type="match status" value="1"/>
</dbReference>
<dbReference type="PROSITE" id="PS51296">
    <property type="entry name" value="RIESKE"/>
    <property type="match status" value="1"/>
</dbReference>
<accession>Q69BJ9</accession>
<feature type="chain" id="PRO_0000307237" description="Cytochrome b-c1 complex subunit 9" evidence="6">
    <location>
        <begin position="1"/>
        <end position="78"/>
    </location>
</feature>
<feature type="chain" id="PRO_0000030658" description="Cytochrome b-c1 complex subunit Rieske, mitochondrial" evidence="1">
    <location>
        <begin position="79"/>
        <end position="274"/>
    </location>
</feature>
<feature type="topological domain" description="Mitochondrial matrix" evidence="3">
    <location>
        <begin position="79"/>
        <end position="103"/>
    </location>
</feature>
<feature type="transmembrane region" description="Helical" evidence="3">
    <location>
        <begin position="104"/>
        <end position="140"/>
    </location>
</feature>
<feature type="topological domain" description="Mitochondrial intermembrane" evidence="3">
    <location>
        <begin position="141"/>
        <end position="274"/>
    </location>
</feature>
<feature type="domain" description="Rieske" evidence="7">
    <location>
        <begin position="187"/>
        <end position="272"/>
    </location>
</feature>
<feature type="binding site" evidence="3">
    <location>
        <position position="217"/>
    </location>
    <ligand>
        <name>[2Fe-2S] cluster</name>
        <dbReference type="ChEBI" id="CHEBI:190135"/>
    </ligand>
</feature>
<feature type="binding site" evidence="3">
    <location>
        <position position="219"/>
    </location>
    <ligand>
        <name>[2Fe-2S] cluster</name>
        <dbReference type="ChEBI" id="CHEBI:190135"/>
    </ligand>
</feature>
<feature type="binding site" evidence="3">
    <location>
        <position position="236"/>
    </location>
    <ligand>
        <name>[2Fe-2S] cluster</name>
        <dbReference type="ChEBI" id="CHEBI:190135"/>
    </ligand>
</feature>
<feature type="binding site" evidence="3">
    <location>
        <position position="239"/>
    </location>
    <ligand>
        <name>[2Fe-2S] cluster</name>
        <dbReference type="ChEBI" id="CHEBI:190135"/>
    </ligand>
</feature>
<feature type="binding site" evidence="3">
    <location>
        <position position="241"/>
    </location>
    <ligand>
        <name>[2Fe-2S] cluster</name>
        <dbReference type="ChEBI" id="CHEBI:190135"/>
    </ligand>
</feature>
<feature type="disulfide bond" evidence="3">
    <location>
        <begin position="222"/>
        <end position="238"/>
    </location>
</feature>
<name>UCRI_AOTAZ</name>
<keyword id="KW-0001">2Fe-2S</keyword>
<keyword id="KW-1015">Disulfide bond</keyword>
<keyword id="KW-0249">Electron transport</keyword>
<keyword id="KW-0408">Iron</keyword>
<keyword id="KW-0411">Iron-sulfur</keyword>
<keyword id="KW-0472">Membrane</keyword>
<keyword id="KW-0479">Metal-binding</keyword>
<keyword id="KW-0496">Mitochondrion</keyword>
<keyword id="KW-0999">Mitochondrion inner membrane</keyword>
<keyword id="KW-0679">Respiratory chain</keyword>
<keyword id="KW-0809">Transit peptide</keyword>
<keyword id="KW-1278">Translocase</keyword>
<keyword id="KW-0812">Transmembrane</keyword>
<keyword id="KW-1133">Transmembrane helix</keyword>
<keyword id="KW-0813">Transport</keyword>
<reference key="1">
    <citation type="submission" date="2003-09" db="EMBL/GenBank/DDBJ databases">
        <title>Molecular evolution of the iron sulfur protein and subunit 9 of complex III of the electron transport chain in primates.</title>
        <authorList>
            <person name="Doan J.W."/>
            <person name="Wildman D.E."/>
            <person name="Schmidt T.R."/>
            <person name="Weiss M.L."/>
            <person name="Goodman M."/>
            <person name="Grossman L.I."/>
        </authorList>
    </citation>
    <scope>NUCLEOTIDE SEQUENCE [GENOMIC DNA]</scope>
</reference>
<gene>
    <name type="primary">UQCRFS1</name>
</gene>
<sequence length="274" mass="29836">MLSVAARSGPFAPVLSATSRGVAXXXXXXXXXXXXXTPQPPVLDPKRPILSRESLSGQAARRPLVATVGLNVPASVRYSHTDIKVPDFSDYRRSEVLDTTKSSRESSDARKGFSYLVTATTAVGVTYAAKSIVTQFVSSMSASADVLAMSKIEIKLSDIPEGKNMAFKWRGKPLFVRHRTQKEIEQEAAVELSQLRDPQHDLDRVKKPEWMILIGVCTHLGCVPIANAGDFGGYYCPCHGSHYDASGRIRKGPAPLNLEVPTYEFTSDDLVIVG</sequence>
<evidence type="ECO:0000250" key="1"/>
<evidence type="ECO:0000250" key="2">
    <source>
        <dbReference type="UniProtKB" id="P08067"/>
    </source>
</evidence>
<evidence type="ECO:0000250" key="3">
    <source>
        <dbReference type="UniProtKB" id="P13272"/>
    </source>
</evidence>
<evidence type="ECO:0000250" key="4">
    <source>
        <dbReference type="UniProtKB" id="P47985"/>
    </source>
</evidence>
<evidence type="ECO:0000250" key="5">
    <source>
        <dbReference type="UniProtKB" id="Q5ZLR5"/>
    </source>
</evidence>
<evidence type="ECO:0000250" key="6">
    <source>
        <dbReference type="UniProtKB" id="Q9CR68"/>
    </source>
</evidence>
<evidence type="ECO:0000255" key="7">
    <source>
        <dbReference type="PROSITE-ProRule" id="PRU00628"/>
    </source>
</evidence>
<evidence type="ECO:0000305" key="8"/>